<keyword id="KW-0007">Acetylation</keyword>
<keyword id="KW-0158">Chromosome</keyword>
<keyword id="KW-0238">DNA-binding</keyword>
<keyword id="KW-0379">Hydroxylation</keyword>
<keyword id="KW-1017">Isopeptide bond</keyword>
<keyword id="KW-0488">Methylation</keyword>
<keyword id="KW-0544">Nucleosome core</keyword>
<keyword id="KW-0539">Nucleus</keyword>
<keyword id="KW-0597">Phosphoprotein</keyword>
<keyword id="KW-1185">Reference proteome</keyword>
<keyword id="KW-0832">Ubl conjugation</keyword>
<gene>
    <name evidence="18" type="primary">H2BC20P</name>
    <name evidence="18" type="synonym">HIST2H2BC</name>
</gene>
<name>H2B2C_HUMAN</name>
<comment type="function">
    <text>Core component of nucleosome. Nucleosomes wrap and compact DNA into chromatin, limiting DNA accessibility to the cellular machineries which require DNA as a template. Histones thereby play a central role in transcription regulation, DNA repair, DNA replication and chromosomal stability. DNA accessibility is regulated via a complex set of post-translational modifications of histones, also called histone code, and nucleosome remodeling.</text>
</comment>
<comment type="subunit">
    <text>The nucleosome is a histone octamer containing two molecules each of H2A, H2B, H3 and H4 assembled in one H3-H4 heterotetramer and two H2A-H2B heterodimers. The octamer wraps approximately 147 bp of DNA.</text>
</comment>
<comment type="subcellular location">
    <subcellularLocation>
        <location>Nucleus</location>
    </subcellularLocation>
    <subcellularLocation>
        <location>Chromosome</location>
    </subcellularLocation>
</comment>
<comment type="PTM">
    <text evidence="6 9">Phosphorylation at Ser-37 (H2BS36ph) by AMPK in response to stress promotes transcription (By similarity). Phosphorylated on Ser-15 (H2BS14ph) by STK4/MST1 during apoptosis; which facilitates apoptotic chromatin condensation. Also phosphorylated on Ser-15 in response to DNA double strand breaks (DSBs), and in correlation with somatic hypermutation and immunoglobulin class-switch recombination.</text>
</comment>
<comment type="PTM">
    <text evidence="11">Crotonylation (Kcr) is specifically present in male germ cells and marks testis-specific genes in post-meiotic cells, including X-linked genes that escape sex chromosome inactivation in haploid cells. Crotonylation marks active promoters and enhancers and confers resistance to transcriptional repressors. It is also associated with post-meiotically activated genes on autosomes.</text>
</comment>
<comment type="PTM">
    <text evidence="2">Lactylated in macrophages by EP300/P300 by using lactoyl-CoA directly derived from endogenous or exogenous lactate, leading to stimulates gene transcription.</text>
</comment>
<comment type="miscellaneous">
    <text>The mouse orthologous protein seems not to exist.</text>
</comment>
<comment type="similarity">
    <text evidence="17">Belongs to the histone H2B family.</text>
</comment>
<comment type="caution">
    <text evidence="17">Could be the product of a pseudogene. In contrast to other H2B histones, it does not contain the conserved residue in C-terminus that is the target of monoubiquitination.</text>
</comment>
<feature type="initiator methionine" description="Removed" evidence="1">
    <location>
        <position position="1"/>
    </location>
</feature>
<feature type="chain" id="PRO_0000244824" description="Putative histone H2B type 2-C">
    <location>
        <begin position="2"/>
        <end position="193"/>
    </location>
</feature>
<feature type="region of interest" description="Disordered" evidence="8">
    <location>
        <begin position="1"/>
        <end position="33"/>
    </location>
</feature>
<feature type="region of interest" description="Disordered" evidence="8">
    <location>
        <begin position="111"/>
        <end position="136"/>
    </location>
</feature>
<feature type="compositionally biased region" description="Low complexity" evidence="8">
    <location>
        <begin position="1"/>
        <end position="12"/>
    </location>
</feature>
<feature type="modified residue" description="N-acetylproline" evidence="1">
    <location>
        <position position="2"/>
    </location>
</feature>
<feature type="modified residue" description="N6-(2-hydroxyisobutyryl)lysine; alternate" evidence="13">
    <location>
        <position position="6"/>
    </location>
</feature>
<feature type="modified residue" description="N6-(beta-hydroxybutyryl)lysine; alternate" evidence="15">
    <location>
        <position position="6"/>
    </location>
</feature>
<feature type="modified residue" description="N6-acetyllysine; alternate" evidence="10">
    <location>
        <position position="6"/>
    </location>
</feature>
<feature type="modified residue" description="N6-butyryllysine; alternate" evidence="14">
    <location>
        <position position="6"/>
    </location>
</feature>
<feature type="modified residue" description="N6-crotonyllysine; alternate" evidence="11">
    <location>
        <position position="6"/>
    </location>
</feature>
<feature type="modified residue" description="N6-lactoyllysine; alternate" evidence="2">
    <location>
        <position position="6"/>
    </location>
</feature>
<feature type="modified residue" description="N6-(beta-hydroxybutyryl)lysine; alternate" evidence="15">
    <location>
        <position position="12"/>
    </location>
</feature>
<feature type="modified residue" description="N6-acetyllysine; alternate" evidence="4">
    <location>
        <position position="12"/>
    </location>
</feature>
<feature type="modified residue" description="N6-crotonyllysine; alternate" evidence="11">
    <location>
        <position position="12"/>
    </location>
</feature>
<feature type="modified residue" description="N6-lactoyllysine; alternate" evidence="2">
    <location>
        <position position="12"/>
    </location>
</feature>
<feature type="modified residue" description="N6-(2-hydroxyisobutyryl)lysine; alternate" evidence="13">
    <location>
        <position position="13"/>
    </location>
</feature>
<feature type="modified residue" description="N6-acetyllysine; alternate" evidence="10">
    <location>
        <position position="13"/>
    </location>
</feature>
<feature type="modified residue" description="N6-crotonyllysine; alternate" evidence="11">
    <location>
        <position position="13"/>
    </location>
</feature>
<feature type="modified residue" description="Phosphoserine; by STK4/MST1" evidence="9">
    <location>
        <position position="15"/>
    </location>
</feature>
<feature type="modified residue" description="N6-acetyllysine; alternate" evidence="10">
    <location>
        <position position="16"/>
    </location>
</feature>
<feature type="modified residue" description="N6-crotonyllysine; alternate" evidence="11">
    <location>
        <position position="16"/>
    </location>
</feature>
<feature type="modified residue" description="N6-lactoyllysine; alternate" evidence="2">
    <location>
        <position position="16"/>
    </location>
</feature>
<feature type="modified residue" description="N6-(beta-hydroxybutyryl)lysine; alternate" evidence="15">
    <location>
        <position position="17"/>
    </location>
</feature>
<feature type="modified residue" description="N6-acetyllysine; alternate" evidence="2">
    <location>
        <position position="17"/>
    </location>
</feature>
<feature type="modified residue" description="N6-crotonyllysine; alternate" evidence="11">
    <location>
        <position position="17"/>
    </location>
</feature>
<feature type="modified residue" description="N6-glutaryllysine; alternate" evidence="16">
    <location>
        <position position="17"/>
    </location>
</feature>
<feature type="modified residue" description="N6-lactoyllysine; alternate" evidence="2">
    <location>
        <position position="17"/>
    </location>
</feature>
<feature type="modified residue" description="N6-(2-hydroxyisobutyryl)lysine; alternate" evidence="13">
    <location>
        <position position="21"/>
    </location>
</feature>
<feature type="modified residue" description="N6-(beta-hydroxybutyryl)lysine; alternate" evidence="15">
    <location>
        <position position="21"/>
    </location>
</feature>
<feature type="modified residue" description="N6-acetyllysine; alternate" evidence="10">
    <location>
        <position position="21"/>
    </location>
</feature>
<feature type="modified residue" description="N6-butyryllysine; alternate" evidence="14">
    <location>
        <position position="21"/>
    </location>
</feature>
<feature type="modified residue" description="N6-crotonyllysine; alternate" evidence="11">
    <location>
        <position position="21"/>
    </location>
</feature>
<feature type="modified residue" description="N6-lactoyllysine; alternate" evidence="2">
    <location>
        <position position="21"/>
    </location>
</feature>
<feature type="modified residue" description="N6-(2-hydroxyisobutyryl)lysine; alternate" evidence="13">
    <location>
        <position position="24"/>
    </location>
</feature>
<feature type="modified residue" description="N6-acetyllysine; alternate" evidence="2">
    <location>
        <position position="24"/>
    </location>
</feature>
<feature type="modified residue" description="N6-crotonyllysine; alternate" evidence="11">
    <location>
        <position position="24"/>
    </location>
</feature>
<feature type="modified residue" description="N6-lactoyllysine; alternate" evidence="2">
    <location>
        <position position="24"/>
    </location>
</feature>
<feature type="modified residue" description="N6-(2-hydroxyisobutyryl)lysine" evidence="13">
    <location>
        <position position="25"/>
    </location>
</feature>
<feature type="modified residue" description="N6-(2-hydroxyisobutyryl)lysine; alternate" evidence="13">
    <location>
        <position position="35"/>
    </location>
</feature>
<feature type="modified residue" description="N6-(beta-hydroxybutyryl)lysine; alternate" evidence="15">
    <location>
        <position position="35"/>
    </location>
</feature>
<feature type="modified residue" description="N6-crotonyllysine; alternate" evidence="11">
    <location>
        <position position="35"/>
    </location>
</feature>
<feature type="modified residue" description="N6-glutaryllysine; alternate" evidence="16">
    <location>
        <position position="35"/>
    </location>
</feature>
<feature type="modified residue" description="N6-succinyllysine; alternate" evidence="12">
    <location>
        <position position="35"/>
    </location>
</feature>
<feature type="modified residue" description="Phosphoserine; by AMPK" evidence="6">
    <location>
        <position position="37"/>
    </location>
</feature>
<feature type="modified residue" description="N6-(2-hydroxyisobutyryl)lysine; alternate" evidence="13">
    <location>
        <position position="44"/>
    </location>
</feature>
<feature type="modified residue" description="N6-glutaryllysine; alternate" evidence="16">
    <location>
        <position position="44"/>
    </location>
</feature>
<feature type="modified residue" description="N6-lactoyllysine; alternate" evidence="2">
    <location>
        <position position="44"/>
    </location>
</feature>
<feature type="modified residue" description="N6-(2-hydroxyisobutyryl)lysine; alternate" evidence="13">
    <location>
        <position position="47"/>
    </location>
</feature>
<feature type="modified residue" description="N6-glutaryllysine; alternate" evidence="16">
    <location>
        <position position="47"/>
    </location>
</feature>
<feature type="modified residue" description="N6-methyllysine; alternate" evidence="4">
    <location>
        <position position="47"/>
    </location>
</feature>
<feature type="modified residue" description="N6,N6-dimethyllysine; alternate" evidence="4">
    <location>
        <position position="58"/>
    </location>
</feature>
<feature type="modified residue" description="N6-(2-hydroxyisobutyryl)lysine; alternate" evidence="13">
    <location>
        <position position="58"/>
    </location>
</feature>
<feature type="modified residue" description="Dimethylated arginine" evidence="7">
    <location>
        <position position="80"/>
    </location>
</feature>
<feature type="modified residue" description="N6,N6,N6-trimethyllysine; alternate" evidence="7">
    <location>
        <position position="86"/>
    </location>
</feature>
<feature type="modified residue" description="N6-(2-hydroxyisobutyryl)lysine; alternate" evidence="13">
    <location>
        <position position="86"/>
    </location>
</feature>
<feature type="modified residue" description="N6-(beta-hydroxybutyryl)lysine; alternate" evidence="15">
    <location>
        <position position="86"/>
    </location>
</feature>
<feature type="modified residue" description="N6-acetyllysine; alternate" evidence="7">
    <location>
        <position position="86"/>
    </location>
</feature>
<feature type="modified residue" description="N6-lactoyllysine; alternate" evidence="2">
    <location>
        <position position="86"/>
    </location>
</feature>
<feature type="modified residue" description="Omega-N-methylarginine" evidence="7">
    <location>
        <position position="87"/>
    </location>
</feature>
<feature type="modified residue" description="Omega-N-methylarginine" evidence="7">
    <location>
        <position position="93"/>
    </location>
</feature>
<feature type="cross-link" description="Glycyl lysine isopeptide (Lys-Gly) (interchain with G-Cter in SUMO2); alternate" evidence="3">
    <location>
        <position position="6"/>
    </location>
</feature>
<feature type="cross-link" description="Glycyl lysine isopeptide (Lys-Gly) (interchain with G-Cter in SUMO2); alternate" evidence="5">
    <location>
        <position position="21"/>
    </location>
</feature>
<feature type="cross-link" description="Glycyl lysine isopeptide (Lys-Gly) (interchain with G-Cter in ubiquitin); alternate" evidence="2">
    <location>
        <position position="35"/>
    </location>
</feature>
<evidence type="ECO:0000250" key="1">
    <source>
        <dbReference type="UniProtKB" id="P23527"/>
    </source>
</evidence>
<evidence type="ECO:0000250" key="2">
    <source>
        <dbReference type="UniProtKB" id="P33778"/>
    </source>
</evidence>
<evidence type="ECO:0000250" key="3">
    <source>
        <dbReference type="UniProtKB" id="P58876"/>
    </source>
</evidence>
<evidence type="ECO:0000250" key="4">
    <source>
        <dbReference type="UniProtKB" id="P62807"/>
    </source>
</evidence>
<evidence type="ECO:0000250" key="5">
    <source>
        <dbReference type="UniProtKB" id="Q5QNW6"/>
    </source>
</evidence>
<evidence type="ECO:0000250" key="6">
    <source>
        <dbReference type="UniProtKB" id="Q64475"/>
    </source>
</evidence>
<evidence type="ECO:0000250" key="7">
    <source>
        <dbReference type="UniProtKB" id="Q96A08"/>
    </source>
</evidence>
<evidence type="ECO:0000256" key="8">
    <source>
        <dbReference type="SAM" id="MobiDB-lite"/>
    </source>
</evidence>
<evidence type="ECO:0000269" key="9">
    <source>
    </source>
</evidence>
<evidence type="ECO:0000269" key="10">
    <source>
    </source>
</evidence>
<evidence type="ECO:0000269" key="11">
    <source>
    </source>
</evidence>
<evidence type="ECO:0000269" key="12">
    <source>
    </source>
</evidence>
<evidence type="ECO:0000269" key="13">
    <source>
    </source>
</evidence>
<evidence type="ECO:0000269" key="14">
    <source>
    </source>
</evidence>
<evidence type="ECO:0000269" key="15">
    <source>
    </source>
</evidence>
<evidence type="ECO:0000269" key="16">
    <source>
    </source>
</evidence>
<evidence type="ECO:0000305" key="17"/>
<evidence type="ECO:0000312" key="18">
    <source>
        <dbReference type="HGNC" id="HGNC:20516"/>
    </source>
</evidence>
<sequence length="193" mass="21472">MPEPAKFAPAPKKGSKKAVTKAQKKDGKKRKRSRKESYSIYVYKVLKRVHPDTGIWCKAMGIMNSFLNDIFERIAGEASRLAHYNKRSTITSRRSRRPCACCCPASWPSTPCPRAPRRSPSTPAPSESLPGPGARSLPPSLPPRVAGCFVSKGSFQGHLTTSVKESFLCCQSQLMFLASRLVNFRRAHNTKHR</sequence>
<dbReference type="EMBL" id="AY656810">
    <property type="protein sequence ID" value="AAT72343.1"/>
    <property type="molecule type" value="Genomic_DNA"/>
</dbReference>
<dbReference type="EMBL" id="AY131977">
    <property type="status" value="NOT_ANNOTATED_CDS"/>
    <property type="molecule type" value="Genomic_DNA"/>
</dbReference>
<dbReference type="EMBL" id="AK299891">
    <property type="protein sequence ID" value="BAH13163.1"/>
    <property type="molecule type" value="mRNA"/>
</dbReference>
<dbReference type="EMDB" id="EMD-14198"/>
<dbReference type="EMDB" id="EMD-14199"/>
<dbReference type="SMR" id="Q6DN03"/>
<dbReference type="FunCoup" id="Q6DN03">
    <property type="interactions" value="2"/>
</dbReference>
<dbReference type="IntAct" id="Q6DN03">
    <property type="interactions" value="29"/>
</dbReference>
<dbReference type="MINT" id="Q6DN03"/>
<dbReference type="GlyGen" id="Q6DN03">
    <property type="glycosylation" value="1 site"/>
</dbReference>
<dbReference type="iPTMnet" id="Q6DN03"/>
<dbReference type="MetOSite" id="Q6DN03"/>
<dbReference type="PhosphoSitePlus" id="Q6DN03"/>
<dbReference type="SwissPalm" id="Q6DN03"/>
<dbReference type="BioMuta" id="HGNC:20516"/>
<dbReference type="DMDM" id="74709215"/>
<dbReference type="jPOST" id="Q6DN03"/>
<dbReference type="MassIVE" id="Q6DN03"/>
<dbReference type="PeptideAtlas" id="Q6DN03"/>
<dbReference type="Pumba" id="Q6DN03"/>
<dbReference type="AGR" id="HGNC:20516"/>
<dbReference type="GeneCards" id="H2BC20P"/>
<dbReference type="HGNC" id="HGNC:20516">
    <property type="gene designation" value="H2BC20P"/>
</dbReference>
<dbReference type="neXtProt" id="NX_Q6DN03"/>
<dbReference type="InParanoid" id="Q6DN03"/>
<dbReference type="PAN-GO" id="Q6DN03">
    <property type="GO annotations" value="2 GO annotations based on evolutionary models"/>
</dbReference>
<dbReference type="PathwayCommons" id="Q6DN03"/>
<dbReference type="SignaLink" id="Q6DN03"/>
<dbReference type="SIGNOR" id="Q6DN03"/>
<dbReference type="Pharos" id="Q6DN03">
    <property type="development level" value="Tdark"/>
</dbReference>
<dbReference type="Proteomes" id="UP000005640">
    <property type="component" value="Unplaced"/>
</dbReference>
<dbReference type="RNAct" id="Q6DN03">
    <property type="molecule type" value="protein"/>
</dbReference>
<dbReference type="GO" id="GO:0000786">
    <property type="term" value="C:nucleosome"/>
    <property type="evidence" value="ECO:0007669"/>
    <property type="project" value="UniProtKB-KW"/>
</dbReference>
<dbReference type="GO" id="GO:0005634">
    <property type="term" value="C:nucleus"/>
    <property type="evidence" value="ECO:0007669"/>
    <property type="project" value="UniProtKB-SubCell"/>
</dbReference>
<dbReference type="GO" id="GO:0003677">
    <property type="term" value="F:DNA binding"/>
    <property type="evidence" value="ECO:0007669"/>
    <property type="project" value="UniProtKB-KW"/>
</dbReference>
<dbReference type="GO" id="GO:0046982">
    <property type="term" value="F:protein heterodimerization activity"/>
    <property type="evidence" value="ECO:0007669"/>
    <property type="project" value="InterPro"/>
</dbReference>
<dbReference type="GO" id="GO:0030527">
    <property type="term" value="F:structural constituent of chromatin"/>
    <property type="evidence" value="ECO:0007669"/>
    <property type="project" value="InterPro"/>
</dbReference>
<dbReference type="CDD" id="cd22910">
    <property type="entry name" value="HFD_H2B"/>
    <property type="match status" value="1"/>
</dbReference>
<dbReference type="FunFam" id="1.10.20.10:FF:000043">
    <property type="entry name" value="Histone H2B"/>
    <property type="match status" value="1"/>
</dbReference>
<dbReference type="Gene3D" id="1.10.20.10">
    <property type="entry name" value="Histone, subunit A"/>
    <property type="match status" value="1"/>
</dbReference>
<dbReference type="InterPro" id="IPR009072">
    <property type="entry name" value="Histone-fold"/>
</dbReference>
<dbReference type="InterPro" id="IPR007125">
    <property type="entry name" value="Histone_H2A/H2B/H3"/>
</dbReference>
<dbReference type="InterPro" id="IPR000558">
    <property type="entry name" value="Histone_H2B"/>
</dbReference>
<dbReference type="PANTHER" id="PTHR23428">
    <property type="entry name" value="HISTONE H2B"/>
    <property type="match status" value="1"/>
</dbReference>
<dbReference type="Pfam" id="PF00125">
    <property type="entry name" value="Histone"/>
    <property type="match status" value="1"/>
</dbReference>
<dbReference type="PRINTS" id="PR00621">
    <property type="entry name" value="HISTONEH2B"/>
</dbReference>
<dbReference type="SMART" id="SM00427">
    <property type="entry name" value="H2B"/>
    <property type="match status" value="1"/>
</dbReference>
<dbReference type="SUPFAM" id="SSF47113">
    <property type="entry name" value="Histone-fold"/>
    <property type="match status" value="1"/>
</dbReference>
<accession>Q6DN03</accession>
<accession>B7Z677</accession>
<proteinExistence type="uncertain"/>
<reference key="1">
    <citation type="journal article" date="2002" name="Genomics">
        <title>The human and mouse replication-dependent histone genes.</title>
        <authorList>
            <person name="Marzluff W.F."/>
            <person name="Gongidi P."/>
            <person name="Woods K.R."/>
            <person name="Jin J."/>
            <person name="Maltais L.J."/>
        </authorList>
    </citation>
    <scope>NUCLEOTIDE SEQUENCE [GENOMIC DNA]</scope>
</reference>
<reference key="2">
    <citation type="journal article" date="2004" name="Gene">
        <title>Functional characterization of a human histone gene cluster duplication.</title>
        <authorList>
            <person name="Braastad C.D."/>
            <person name="Hovhannisyan H."/>
            <person name="van Wijnen A.J."/>
            <person name="Stein J.L."/>
            <person name="Stein G.S."/>
        </authorList>
    </citation>
    <scope>NUCLEOTIDE SEQUENCE [GENOMIC DNA]</scope>
</reference>
<reference key="3">
    <citation type="journal article" date="2004" name="Nat. Genet.">
        <title>Complete sequencing and characterization of 21,243 full-length human cDNAs.</title>
        <authorList>
            <person name="Ota T."/>
            <person name="Suzuki Y."/>
            <person name="Nishikawa T."/>
            <person name="Otsuki T."/>
            <person name="Sugiyama T."/>
            <person name="Irie R."/>
            <person name="Wakamatsu A."/>
            <person name="Hayashi K."/>
            <person name="Sato H."/>
            <person name="Nagai K."/>
            <person name="Kimura K."/>
            <person name="Makita H."/>
            <person name="Sekine M."/>
            <person name="Obayashi M."/>
            <person name="Nishi T."/>
            <person name="Shibahara T."/>
            <person name="Tanaka T."/>
            <person name="Ishii S."/>
            <person name="Yamamoto J."/>
            <person name="Saito K."/>
            <person name="Kawai Y."/>
            <person name="Isono Y."/>
            <person name="Nakamura Y."/>
            <person name="Nagahari K."/>
            <person name="Murakami K."/>
            <person name="Yasuda T."/>
            <person name="Iwayanagi T."/>
            <person name="Wagatsuma M."/>
            <person name="Shiratori A."/>
            <person name="Sudo H."/>
            <person name="Hosoiri T."/>
            <person name="Kaku Y."/>
            <person name="Kodaira H."/>
            <person name="Kondo H."/>
            <person name="Sugawara M."/>
            <person name="Takahashi M."/>
            <person name="Kanda K."/>
            <person name="Yokoi T."/>
            <person name="Furuya T."/>
            <person name="Kikkawa E."/>
            <person name="Omura Y."/>
            <person name="Abe K."/>
            <person name="Kamihara K."/>
            <person name="Katsuta N."/>
            <person name="Sato K."/>
            <person name="Tanikawa M."/>
            <person name="Yamazaki M."/>
            <person name="Ninomiya K."/>
            <person name="Ishibashi T."/>
            <person name="Yamashita H."/>
            <person name="Murakawa K."/>
            <person name="Fujimori K."/>
            <person name="Tanai H."/>
            <person name="Kimata M."/>
            <person name="Watanabe M."/>
            <person name="Hiraoka S."/>
            <person name="Chiba Y."/>
            <person name="Ishida S."/>
            <person name="Ono Y."/>
            <person name="Takiguchi S."/>
            <person name="Watanabe S."/>
            <person name="Yosida M."/>
            <person name="Hotuta T."/>
            <person name="Kusano J."/>
            <person name="Kanehori K."/>
            <person name="Takahashi-Fujii A."/>
            <person name="Hara H."/>
            <person name="Tanase T.-O."/>
            <person name="Nomura Y."/>
            <person name="Togiya S."/>
            <person name="Komai F."/>
            <person name="Hara R."/>
            <person name="Takeuchi K."/>
            <person name="Arita M."/>
            <person name="Imose N."/>
            <person name="Musashino K."/>
            <person name="Yuuki H."/>
            <person name="Oshima A."/>
            <person name="Sasaki N."/>
            <person name="Aotsuka S."/>
            <person name="Yoshikawa Y."/>
            <person name="Matsunawa H."/>
            <person name="Ichihara T."/>
            <person name="Shiohata N."/>
            <person name="Sano S."/>
            <person name="Moriya S."/>
            <person name="Momiyama H."/>
            <person name="Satoh N."/>
            <person name="Takami S."/>
            <person name="Terashima Y."/>
            <person name="Suzuki O."/>
            <person name="Nakagawa S."/>
            <person name="Senoh A."/>
            <person name="Mizoguchi H."/>
            <person name="Goto Y."/>
            <person name="Shimizu F."/>
            <person name="Wakebe H."/>
            <person name="Hishigaki H."/>
            <person name="Watanabe T."/>
            <person name="Sugiyama A."/>
            <person name="Takemoto M."/>
            <person name="Kawakami B."/>
            <person name="Yamazaki M."/>
            <person name="Watanabe K."/>
            <person name="Kumagai A."/>
            <person name="Itakura S."/>
            <person name="Fukuzumi Y."/>
            <person name="Fujimori Y."/>
            <person name="Komiyama M."/>
            <person name="Tashiro H."/>
            <person name="Tanigami A."/>
            <person name="Fujiwara T."/>
            <person name="Ono T."/>
            <person name="Yamada K."/>
            <person name="Fujii Y."/>
            <person name="Ozaki K."/>
            <person name="Hirao M."/>
            <person name="Ohmori Y."/>
            <person name="Kawabata A."/>
            <person name="Hikiji T."/>
            <person name="Kobatake N."/>
            <person name="Inagaki H."/>
            <person name="Ikema Y."/>
            <person name="Okamoto S."/>
            <person name="Okitani R."/>
            <person name="Kawakami T."/>
            <person name="Noguchi S."/>
            <person name="Itoh T."/>
            <person name="Shigeta K."/>
            <person name="Senba T."/>
            <person name="Matsumura K."/>
            <person name="Nakajima Y."/>
            <person name="Mizuno T."/>
            <person name="Morinaga M."/>
            <person name="Sasaki M."/>
            <person name="Togashi T."/>
            <person name="Oyama M."/>
            <person name="Hata H."/>
            <person name="Watanabe M."/>
            <person name="Komatsu T."/>
            <person name="Mizushima-Sugano J."/>
            <person name="Satoh T."/>
            <person name="Shirai Y."/>
            <person name="Takahashi Y."/>
            <person name="Nakagawa K."/>
            <person name="Okumura K."/>
            <person name="Nagase T."/>
            <person name="Nomura N."/>
            <person name="Kikuchi H."/>
            <person name="Masuho Y."/>
            <person name="Yamashita R."/>
            <person name="Nakai K."/>
            <person name="Yada T."/>
            <person name="Nakamura Y."/>
            <person name="Ohara O."/>
            <person name="Isogai T."/>
            <person name="Sugano S."/>
        </authorList>
    </citation>
    <scope>NUCLEOTIDE SEQUENCE [LARGE SCALE MRNA]</scope>
    <source>
        <tissue>Brain</tissue>
    </source>
</reference>
<reference key="4">
    <citation type="journal article" date="2003" name="Cell">
        <title>Apoptotic phosphorylation of histone H2B is mediated by mammalian sterile twenty kinase.</title>
        <authorList>
            <person name="Cheung W.L."/>
            <person name="Ajiro K."/>
            <person name="Samejima K."/>
            <person name="Kloc M."/>
            <person name="Cheung P."/>
            <person name="Mizzen C.A."/>
            <person name="Beeser A."/>
            <person name="Etkin L.D."/>
            <person name="Chernoff J."/>
            <person name="Earnshaw W.C."/>
            <person name="Allis C.D."/>
        </authorList>
    </citation>
    <scope>PHOSPHORYLATION AT SER-15</scope>
</reference>
<reference key="5">
    <citation type="journal article" date="2005" name="Mol. Cell. Biochem.">
        <title>Inhibition of core histones acetylation by carcinogenic nickel(II).</title>
        <authorList>
            <person name="Golebiowski F."/>
            <person name="Kasprzak K.S."/>
        </authorList>
    </citation>
    <scope>ACETYLATION AT LYS-6; LYS-13; LYS-16 AND LYS-21</scope>
</reference>
<reference key="6">
    <citation type="journal article" date="2011" name="Cell">
        <title>Identification of 67 histone marks and histone lysine crotonylation as a new type of histone modification.</title>
        <authorList>
            <person name="Tan M."/>
            <person name="Luo H."/>
            <person name="Lee S."/>
            <person name="Jin F."/>
            <person name="Yang J.S."/>
            <person name="Montellier E."/>
            <person name="Buchou T."/>
            <person name="Cheng Z."/>
            <person name="Rousseaux S."/>
            <person name="Rajagopal N."/>
            <person name="Lu Z."/>
            <person name="Ye Z."/>
            <person name="Zhu Q."/>
            <person name="Wysocka J."/>
            <person name="Ye Y."/>
            <person name="Khochbin S."/>
            <person name="Ren B."/>
            <person name="Zhao Y."/>
        </authorList>
    </citation>
    <scope>CROTONYLATION AT LYS-6; LYS-12; LYS-13; LYS-16; LYS-17; LYS-21; LYS-24 AND LYS-35</scope>
</reference>
<reference key="7">
    <citation type="journal article" date="2012" name="Mol. Cell. Proteomics">
        <title>Lysine succinylation and lysine malonylation in histones.</title>
        <authorList>
            <person name="Xie Z."/>
            <person name="Dai J."/>
            <person name="Dai L."/>
            <person name="Tan M."/>
            <person name="Cheng Z."/>
            <person name="Wu Y."/>
            <person name="Boeke J.D."/>
            <person name="Zhao Y."/>
        </authorList>
    </citation>
    <scope>SUCCINYLATION AT LYS-35</scope>
</reference>
<reference key="8">
    <citation type="journal article" date="2014" name="Nat. Chem. Biol.">
        <title>Lysine 2-hydroxyisobutyrylation is a widely distributed active histone mark.</title>
        <authorList>
            <person name="Dai L."/>
            <person name="Peng C."/>
            <person name="Montellier E."/>
            <person name="Lu Z."/>
            <person name="Chen Y."/>
            <person name="Ishii H."/>
            <person name="Debernardi A."/>
            <person name="Buchou T."/>
            <person name="Rousseaux S."/>
            <person name="Jin F."/>
            <person name="Sabari B.R."/>
            <person name="Deng Z."/>
            <person name="Allis C.D."/>
            <person name="Ren B."/>
            <person name="Khochbin S."/>
            <person name="Zhao Y."/>
        </authorList>
    </citation>
    <scope>HYDROXYBUTYRYLATION AT LYS-6; LYS-13; LYS-21; LYS-24; LYS-25; LYS-35; LYS-44; LYS-47; LYS-58 AND LYS-86</scope>
</reference>
<reference key="9">
    <citation type="journal article" date="2016" name="Mol. Cell">
        <title>Dynamic competing histone H4 K5K8 acetylation and butyrylation are hallmarks of highly active gene promoters.</title>
        <authorList>
            <person name="Goudarzi A."/>
            <person name="Zhang D."/>
            <person name="Huang H."/>
            <person name="Barral S."/>
            <person name="Kwon O.K."/>
            <person name="Qi S."/>
            <person name="Tang Z."/>
            <person name="Buchou T."/>
            <person name="Vitte A.L."/>
            <person name="He T."/>
            <person name="Cheng Z."/>
            <person name="Montellier E."/>
            <person name="Gaucher J."/>
            <person name="Curtet S."/>
            <person name="Debernardi A."/>
            <person name="Charbonnier G."/>
            <person name="Puthier D."/>
            <person name="Petosa C."/>
            <person name="Panne D."/>
            <person name="Rousseaux S."/>
            <person name="Roeder R.G."/>
            <person name="Zhao Y."/>
            <person name="Khochbin S."/>
        </authorList>
    </citation>
    <scope>BUTYRYLATION AT LYS-6 AND LYS-21</scope>
</reference>
<reference key="10">
    <citation type="journal article" date="2016" name="Mol. Cell">
        <title>Metabolic regulation of gene expression by histone lysine beta-hydroxybutyrylation.</title>
        <authorList>
            <person name="Xie Z."/>
            <person name="Zhang D."/>
            <person name="Chung D."/>
            <person name="Tang Z."/>
            <person name="Huang H."/>
            <person name="Dai L."/>
            <person name="Qi S."/>
            <person name="Li J."/>
            <person name="Colak G."/>
            <person name="Chen Y."/>
            <person name="Xia C."/>
            <person name="Peng C."/>
            <person name="Ruan H."/>
            <person name="Kirkey M."/>
            <person name="Wang D."/>
            <person name="Jensen L.M."/>
            <person name="Kwon O.K."/>
            <person name="Lee S."/>
            <person name="Pletcher S.D."/>
            <person name="Tan M."/>
            <person name="Lombard D.B."/>
            <person name="White K.P."/>
            <person name="Zhao H."/>
            <person name="Li J."/>
            <person name="Roeder R.G."/>
            <person name="Yang X."/>
            <person name="Zhao Y."/>
        </authorList>
    </citation>
    <scope>HYDROXYBUTYRYLATION AT LYS-6; LYS-12; LYS-17; LYS-21; LYS-35 AND LYS-86</scope>
</reference>
<reference key="11">
    <citation type="journal article" date="2019" name="Mol. Cell">
        <title>Glutarylation of histone H4 lysine 91 regulates chromatin dynamics.</title>
        <authorList>
            <person name="Bao X."/>
            <person name="Liu Z."/>
            <person name="Zhang W."/>
            <person name="Gladysz K."/>
            <person name="Fung Y.M.E."/>
            <person name="Tian G."/>
            <person name="Xiong Y."/>
            <person name="Wong J.W.H."/>
            <person name="Yuen K.W.Y."/>
            <person name="Li X.D."/>
        </authorList>
    </citation>
    <scope>GLUTARYLATION AT LYS-17; LYS-35; LYS-44 AND LYS-47</scope>
</reference>
<protein>
    <recommendedName>
        <fullName>Putative histone H2B type 2-C</fullName>
    </recommendedName>
    <alternativeName>
        <fullName evidence="18">H2B-clustered histone 20 pseudogene</fullName>
    </alternativeName>
    <alternativeName>
        <fullName>Histone H2B.t</fullName>
        <shortName>H2B/t</shortName>
    </alternativeName>
</protein>
<organism>
    <name type="scientific">Homo sapiens</name>
    <name type="common">Human</name>
    <dbReference type="NCBI Taxonomy" id="9606"/>
    <lineage>
        <taxon>Eukaryota</taxon>
        <taxon>Metazoa</taxon>
        <taxon>Chordata</taxon>
        <taxon>Craniata</taxon>
        <taxon>Vertebrata</taxon>
        <taxon>Euteleostomi</taxon>
        <taxon>Mammalia</taxon>
        <taxon>Eutheria</taxon>
        <taxon>Euarchontoglires</taxon>
        <taxon>Primates</taxon>
        <taxon>Haplorrhini</taxon>
        <taxon>Catarrhini</taxon>
        <taxon>Hominidae</taxon>
        <taxon>Homo</taxon>
    </lineage>
</organism>